<dbReference type="EMBL" id="Y00293">
    <property type="protein sequence ID" value="CAA68399.1"/>
    <property type="molecule type" value="Genomic_DNA"/>
</dbReference>
<dbReference type="EMBL" id="X17403">
    <property type="protein sequence ID" value="CAA35417.1"/>
    <property type="molecule type" value="Genomic_DNA"/>
</dbReference>
<dbReference type="EMBL" id="BK000394">
    <property type="protein sequence ID" value="DAA00121.1"/>
    <property type="molecule type" value="Genomic_DNA"/>
</dbReference>
<dbReference type="PIR" id="S09781">
    <property type="entry name" value="HLBECM"/>
</dbReference>
<dbReference type="PDB" id="3D2U">
    <property type="method" value="X-ray"/>
    <property type="resolution" value="2.21 A"/>
    <property type="chains" value="A/E=21-301"/>
</dbReference>
<dbReference type="PDBsum" id="3D2U"/>
<dbReference type="SMR" id="P08560"/>
<dbReference type="DIP" id="DIP-46164N"/>
<dbReference type="GlyCosmos" id="P08560">
    <property type="glycosylation" value="13 sites, No reported glycans"/>
</dbReference>
<dbReference type="EvolutionaryTrace" id="P08560"/>
<dbReference type="Proteomes" id="UP000008991">
    <property type="component" value="Segment"/>
</dbReference>
<dbReference type="Proteomes" id="UP000008992">
    <property type="component" value="Segment"/>
</dbReference>
<dbReference type="GO" id="GO:0033644">
    <property type="term" value="C:host cell membrane"/>
    <property type="evidence" value="ECO:0007669"/>
    <property type="project" value="UniProtKB-SubCell"/>
</dbReference>
<dbReference type="GO" id="GO:0042612">
    <property type="term" value="C:MHC class I protein complex"/>
    <property type="evidence" value="ECO:0007669"/>
    <property type="project" value="UniProtKB-KW"/>
</dbReference>
<dbReference type="GO" id="GO:0002474">
    <property type="term" value="P:antigen processing and presentation of peptide antigen via MHC class I"/>
    <property type="evidence" value="ECO:0007669"/>
    <property type="project" value="UniProtKB-KW"/>
</dbReference>
<dbReference type="GO" id="GO:0032689">
    <property type="term" value="P:negative regulation of type II interferon production"/>
    <property type="evidence" value="ECO:0000314"/>
    <property type="project" value="UniProtKB"/>
</dbReference>
<dbReference type="GO" id="GO:0031623">
    <property type="term" value="P:receptor internalization"/>
    <property type="evidence" value="ECO:0000304"/>
    <property type="project" value="UniProtKB"/>
</dbReference>
<dbReference type="GO" id="GO:0039671">
    <property type="term" value="P:symbiont-mediated perturbation of host natural killer cell mediated immune response"/>
    <property type="evidence" value="ECO:0007669"/>
    <property type="project" value="UniProtKB-KW"/>
</dbReference>
<dbReference type="FunFam" id="3.30.500.10:FF:000012">
    <property type="entry name" value="Glycoprotein UL18"/>
    <property type="match status" value="1"/>
</dbReference>
<dbReference type="Gene3D" id="2.60.40.10">
    <property type="entry name" value="Immunoglobulins"/>
    <property type="match status" value="1"/>
</dbReference>
<dbReference type="Gene3D" id="3.30.500.10">
    <property type="entry name" value="MHC class I-like antigen recognition-like"/>
    <property type="match status" value="1"/>
</dbReference>
<dbReference type="InterPro" id="IPR036179">
    <property type="entry name" value="Ig-like_dom_sf"/>
</dbReference>
<dbReference type="InterPro" id="IPR013783">
    <property type="entry name" value="Ig-like_fold"/>
</dbReference>
<dbReference type="InterPro" id="IPR003597">
    <property type="entry name" value="Ig_C1-set"/>
</dbReference>
<dbReference type="InterPro" id="IPR050208">
    <property type="entry name" value="MHC_class-I_related"/>
</dbReference>
<dbReference type="InterPro" id="IPR011161">
    <property type="entry name" value="MHC_I-like_Ag-recog"/>
</dbReference>
<dbReference type="InterPro" id="IPR037055">
    <property type="entry name" value="MHC_I-like_Ag-recog_sf"/>
</dbReference>
<dbReference type="InterPro" id="IPR011162">
    <property type="entry name" value="MHC_I/II-like_Ag-recog"/>
</dbReference>
<dbReference type="PANTHER" id="PTHR16675">
    <property type="entry name" value="MHC CLASS I-RELATED"/>
    <property type="match status" value="1"/>
</dbReference>
<dbReference type="PANTHER" id="PTHR16675:SF235">
    <property type="entry name" value="SHKT DOMAIN-CONTAINING PROTEIN"/>
    <property type="match status" value="1"/>
</dbReference>
<dbReference type="Pfam" id="PF07654">
    <property type="entry name" value="C1-set"/>
    <property type="match status" value="1"/>
</dbReference>
<dbReference type="Pfam" id="PF00129">
    <property type="entry name" value="MHC_I"/>
    <property type="match status" value="1"/>
</dbReference>
<dbReference type="SUPFAM" id="SSF48726">
    <property type="entry name" value="Immunoglobulin"/>
    <property type="match status" value="1"/>
</dbReference>
<dbReference type="SUPFAM" id="SSF54452">
    <property type="entry name" value="MHC antigen-recognition domain"/>
    <property type="match status" value="1"/>
</dbReference>
<dbReference type="PROSITE" id="PS00290">
    <property type="entry name" value="IG_MHC"/>
    <property type="match status" value="1"/>
</dbReference>
<keyword id="KW-0002">3D-structure</keyword>
<keyword id="KW-0325">Glycoprotein</keyword>
<keyword id="KW-1043">Host membrane</keyword>
<keyword id="KW-0945">Host-virus interaction</keyword>
<keyword id="KW-0391">Immunity</keyword>
<keyword id="KW-0472">Membrane</keyword>
<keyword id="KW-0490">MHC I</keyword>
<keyword id="KW-1131">Modulation of host NK-cell activity by virus</keyword>
<keyword id="KW-1185">Reference proteome</keyword>
<keyword id="KW-0732">Signal</keyword>
<keyword id="KW-0812">Transmembrane</keyword>
<keyword id="KW-1133">Transmembrane helix</keyword>
<keyword id="KW-0899">Viral immunoevasion</keyword>
<protein>
    <recommendedName>
        <fullName>Glycoprotein UL18</fullName>
    </recommendedName>
</protein>
<name>UL18_HCMVA</name>
<comment type="function">
    <text evidence="3">Plays a role in the protection against host NK cell cytotoxicity by interacting with and modulating the activity of the host inhibitory leukocyte Ig-like receptor 1/LILRB1, which is expressed on monocytes, dendritic cells, as well as subsets of T and NK cells. UL18 exerts an inhibitory effect on LIR-1+ NK cells, while it stimulates LIR-1- NK cell. These modulations prevent lysis of the infected cells by NK cells.</text>
</comment>
<comment type="subunit">
    <text evidence="2">Interacts with host LILRB1.</text>
</comment>
<comment type="subcellular location">
    <subcellularLocation>
        <location evidence="4">Host membrane</location>
        <topology evidence="4">Single-pass membrane protein</topology>
    </subcellularLocation>
</comment>
<proteinExistence type="evidence at protein level"/>
<sequence>MMTMWCLTLFVLWMLRVVGMHVLRYGYTGIFDDTSHMTLTVVGIFDGQHFFTYHVNSSDKASSRANGTISWMANVSAAYPTYLDGERAKGDLIFNQTEQNLLELEIALGYRSQSVLTWTHECNTTENGSFVAGYEGFGWDGETLMELKDNLTLWTGPNYEISWLKQNKTYIDGKIKNISEGDTTIQRNYLKGNCTQWSVIYSGFQPPVTHPVVKGGVRNQNDNRAEAFCTSYGFFPGEINITFIHYGDKVPEDSEPQCNPLLPTLDGTFHQGCYVAIFCNQNYTCRVTHGNWTVEIPISVTSPDDSSSGEVPDHPTANKRYNTMTISSVLLALLLCALLFAFLHYFTTLKQYLRNLAFAWRYRKVRSS</sequence>
<evidence type="ECO:0000255" key="1"/>
<evidence type="ECO:0000269" key="2">
    <source>
    </source>
</evidence>
<evidence type="ECO:0000269" key="3">
    <source>
    </source>
</evidence>
<evidence type="ECO:0000305" key="4"/>
<evidence type="ECO:0007829" key="5">
    <source>
        <dbReference type="PDB" id="3D2U"/>
    </source>
</evidence>
<accession>P08560</accession>
<accession>Q7M6R5</accession>
<organismHost>
    <name type="scientific">Homo sapiens</name>
    <name type="common">Human</name>
    <dbReference type="NCBI Taxonomy" id="9606"/>
</organismHost>
<feature type="signal peptide" evidence="1">
    <location>
        <begin position="1"/>
        <end position="18"/>
    </location>
</feature>
<feature type="chain" id="PRO_0000037452" description="Glycoprotein UL18">
    <location>
        <begin position="19"/>
        <end position="368"/>
    </location>
</feature>
<feature type="transmembrane region" description="Helical" evidence="1">
    <location>
        <begin position="321"/>
        <end position="342"/>
    </location>
</feature>
<feature type="region of interest" description="Alpha-1-like">
    <location>
        <begin position="19"/>
        <end position="114"/>
    </location>
</feature>
<feature type="region of interest" description="Alpha-2-like">
    <location>
        <begin position="115"/>
        <end position="208"/>
    </location>
</feature>
<feature type="region of interest" description="Alpha-3-like">
    <location>
        <begin position="209"/>
        <end position="303"/>
    </location>
</feature>
<feature type="glycosylation site" description="N-linked (GlcNAc...) asparagine; by host" evidence="1">
    <location>
        <position position="56"/>
    </location>
</feature>
<feature type="glycosylation site" description="N-linked (GlcNAc...) asparagine; by host" evidence="1">
    <location>
        <position position="66"/>
    </location>
</feature>
<feature type="glycosylation site" description="N-linked (GlcNAc...) asparagine; by host" evidence="1">
    <location>
        <position position="74"/>
    </location>
</feature>
<feature type="glycosylation site" description="N-linked (GlcNAc...) asparagine; by host" evidence="1">
    <location>
        <position position="95"/>
    </location>
</feature>
<feature type="glycosylation site" description="N-linked (GlcNAc...) asparagine; by host" evidence="1">
    <location>
        <position position="123"/>
    </location>
</feature>
<feature type="glycosylation site" description="N-linked (GlcNAc...) asparagine; by host" evidence="1">
    <location>
        <position position="127"/>
    </location>
</feature>
<feature type="glycosylation site" description="N-linked (GlcNAc...) asparagine; by host" evidence="1">
    <location>
        <position position="150"/>
    </location>
</feature>
<feature type="glycosylation site" description="N-linked (GlcNAc...) asparagine; by host" evidence="1">
    <location>
        <position position="167"/>
    </location>
</feature>
<feature type="glycosylation site" description="N-linked (GlcNAc...) asparagine; by host" evidence="1">
    <location>
        <position position="177"/>
    </location>
</feature>
<feature type="glycosylation site" description="N-linked (GlcNAc...) asparagine; by host" evidence="1">
    <location>
        <position position="193"/>
    </location>
</feature>
<feature type="glycosylation site" description="N-linked (GlcNAc...) asparagine; by host" evidence="1">
    <location>
        <position position="240"/>
    </location>
</feature>
<feature type="glycosylation site" description="N-linked (GlcNAc...) asparagine; by host" evidence="1">
    <location>
        <position position="282"/>
    </location>
</feature>
<feature type="glycosylation site" description="N-linked (GlcNAc...) asparagine; by host" evidence="1">
    <location>
        <position position="291"/>
    </location>
</feature>
<feature type="strand" evidence="5">
    <location>
        <begin position="22"/>
        <end position="35"/>
    </location>
</feature>
<feature type="strand" evidence="5">
    <location>
        <begin position="37"/>
        <end position="45"/>
    </location>
</feature>
<feature type="strand" evidence="5">
    <location>
        <begin position="48"/>
        <end position="58"/>
    </location>
</feature>
<feature type="strand" evidence="5">
    <location>
        <begin position="60"/>
        <end position="62"/>
    </location>
</feature>
<feature type="strand" evidence="5">
    <location>
        <begin position="64"/>
        <end position="67"/>
    </location>
</feature>
<feature type="helix" evidence="5">
    <location>
        <begin position="71"/>
        <end position="78"/>
    </location>
</feature>
<feature type="helix" evidence="5">
    <location>
        <begin position="82"/>
        <end position="108"/>
    </location>
</feature>
<feature type="strand" evidence="5">
    <location>
        <begin position="115"/>
        <end position="124"/>
    </location>
</feature>
<feature type="strand" evidence="5">
    <location>
        <begin position="130"/>
        <end position="139"/>
    </location>
</feature>
<feature type="strand" evidence="5">
    <location>
        <begin position="142"/>
        <end position="147"/>
    </location>
</feature>
<feature type="turn" evidence="5">
    <location>
        <begin position="159"/>
        <end position="161"/>
    </location>
</feature>
<feature type="helix" evidence="5">
    <location>
        <begin position="163"/>
        <end position="167"/>
    </location>
</feature>
<feature type="helix" evidence="5">
    <location>
        <begin position="168"/>
        <end position="176"/>
    </location>
</feature>
<feature type="helix" evidence="5">
    <location>
        <begin position="181"/>
        <end position="191"/>
    </location>
</feature>
<feature type="helix" evidence="5">
    <location>
        <begin position="193"/>
        <end position="204"/>
    </location>
</feature>
<feature type="strand" evidence="5">
    <location>
        <begin position="212"/>
        <end position="221"/>
    </location>
</feature>
<feature type="strand" evidence="5">
    <location>
        <begin position="224"/>
        <end position="237"/>
    </location>
</feature>
<feature type="strand" evidence="5">
    <location>
        <begin position="240"/>
        <end position="248"/>
    </location>
</feature>
<feature type="strand" evidence="5">
    <location>
        <begin position="269"/>
        <end position="278"/>
    </location>
</feature>
<feature type="strand" evidence="5">
    <location>
        <begin position="281"/>
        <end position="288"/>
    </location>
</feature>
<feature type="strand" evidence="5">
    <location>
        <begin position="293"/>
        <end position="299"/>
    </location>
</feature>
<gene>
    <name type="primary">H301</name>
    <name type="synonym">UL18</name>
</gene>
<organism>
    <name type="scientific">Human cytomegalovirus (strain AD169)</name>
    <name type="common">HHV-5</name>
    <name type="synonym">Human herpesvirus 5</name>
    <dbReference type="NCBI Taxonomy" id="10360"/>
    <lineage>
        <taxon>Viruses</taxon>
        <taxon>Duplodnaviria</taxon>
        <taxon>Heunggongvirae</taxon>
        <taxon>Peploviricota</taxon>
        <taxon>Herviviricetes</taxon>
        <taxon>Herpesvirales</taxon>
        <taxon>Orthoherpesviridae</taxon>
        <taxon>Betaherpesvirinae</taxon>
        <taxon>Cytomegalovirus</taxon>
        <taxon>Cytomegalovirus humanbeta5</taxon>
        <taxon>Human cytomegalovirus</taxon>
    </lineage>
</organism>
<reference key="1">
    <citation type="journal article" date="1988" name="Nature">
        <title>Human cytomegalovirus encodes a glycoprotein homologous to MHC class-I antigens.</title>
        <authorList>
            <person name="Beck S."/>
            <person name="Barrell B.G."/>
        </authorList>
    </citation>
    <scope>NUCLEOTIDE SEQUENCE [GENOMIC DNA]</scope>
</reference>
<reference key="2">
    <citation type="journal article" date="1990" name="Curr. Top. Microbiol. Immunol.">
        <title>Analysis of the protein-coding content of the sequence of human cytomegalovirus strain AD169.</title>
        <authorList>
            <person name="Chee M.S."/>
            <person name="Bankier A.T."/>
            <person name="Beck S."/>
            <person name="Bohni R."/>
            <person name="Brown C.M."/>
            <person name="Cerny R."/>
            <person name="Horsnell T."/>
            <person name="Hutchison C.A. III"/>
            <person name="Kouzarides T."/>
            <person name="Martignetti J.A."/>
            <person name="Preddie E."/>
            <person name="Satchwell S.C."/>
            <person name="Tomlinson P."/>
            <person name="Weston K.M."/>
            <person name="Barrell B.G."/>
        </authorList>
    </citation>
    <scope>NUCLEOTIDE SEQUENCE [LARGE SCALE GENOMIC DNA]</scope>
</reference>
<reference key="3">
    <citation type="journal article" date="2003" name="J. Gen. Virol.">
        <title>The human cytomegalovirus genome revisited: comparison with the chimpanzee cytomegalovirus genome.</title>
        <authorList>
            <person name="Davison A.J."/>
            <person name="Dolan A."/>
            <person name="Akter P."/>
            <person name="Addison C."/>
            <person name="Dargan D.J."/>
            <person name="Alcendor D.J."/>
            <person name="McGeoch D.J."/>
            <person name="Hayward G.S."/>
        </authorList>
    </citation>
    <scope>GENOME REANNOTATION</scope>
</reference>
<reference key="4">
    <citation type="journal article" date="2003" name="J. Gen. Virol.">
        <authorList>
            <person name="Davison A.J."/>
            <person name="Dolan A."/>
            <person name="Akter P."/>
            <person name="Addison C."/>
            <person name="Dargan D.J."/>
            <person name="Alcendor D.J."/>
            <person name="McGeoch D.J."/>
            <person name="Hayward G.S."/>
        </authorList>
    </citation>
    <scope>ERRATUM OF PUBMED:12533697</scope>
</reference>
<reference key="5">
    <citation type="journal article" date="1999" name="Immunity">
        <title>The inhibitory receptor LIR-1 uses a common binding interaction to recognize class I MHC molecules and the viral homolog UL18.</title>
        <authorList>
            <person name="Chapman T.L."/>
            <person name="Heikeman A.P."/>
            <person name="Bjorkman P.J."/>
        </authorList>
    </citation>
    <scope>INTERACTION WITH HOST LILRB1</scope>
</reference>
<reference key="6">
    <citation type="journal article" date="2008" name="PLoS Pathog.">
        <title>Human cytomegalovirus UL18 utilizes US6 for evading the NK and T-cell responses.</title>
        <authorList>
            <person name="Kim Y."/>
            <person name="Park B."/>
            <person name="Cho S."/>
            <person name="Shin J."/>
            <person name="Cho K."/>
            <person name="Jun Y."/>
            <person name="Ahn K."/>
        </authorList>
    </citation>
    <scope>FUNCTION</scope>
</reference>
<reference key="7">
    <citation type="journal article" date="2008" name="Proc. Natl. Acad. Sci. U.S.A.">
        <title>Structure of UL18, a peptide-binding viral MHC mimic, bound to a host inhibitory receptor.</title>
        <authorList>
            <person name="Yang Z."/>
            <person name="Bjorkman P.J."/>
        </authorList>
    </citation>
    <scope>X-RAY CRYSTALLOGRAPHY (2.21 ANGSTROMS) OF 21-301</scope>
</reference>